<proteinExistence type="inferred from homology"/>
<gene>
    <name evidence="1" type="primary">hpr</name>
    <name type="ordered locus">Bsph_0398</name>
</gene>
<accession>B1HVK6</accession>
<reference key="1">
    <citation type="journal article" date="2008" name="J. Bacteriol.">
        <title>Complete genome sequence of the mosquitocidal bacterium Bacillus sphaericus C3-41 and comparison with those of closely related Bacillus species.</title>
        <authorList>
            <person name="Hu X."/>
            <person name="Fan W."/>
            <person name="Han B."/>
            <person name="Liu H."/>
            <person name="Zheng D."/>
            <person name="Li Q."/>
            <person name="Dong W."/>
            <person name="Yan J."/>
            <person name="Gao M."/>
            <person name="Berry C."/>
            <person name="Yuan Z."/>
        </authorList>
    </citation>
    <scope>NUCLEOTIDE SEQUENCE [LARGE SCALE GENOMIC DNA]</scope>
    <source>
        <strain>C3-41</strain>
    </source>
</reference>
<name>HPR_LYSSC</name>
<evidence type="ECO:0000255" key="1">
    <source>
        <dbReference type="HAMAP-Rule" id="MF_01911"/>
    </source>
</evidence>
<dbReference type="EMBL" id="CP000817">
    <property type="protein sequence ID" value="ACA38025.1"/>
    <property type="molecule type" value="Genomic_DNA"/>
</dbReference>
<dbReference type="RefSeq" id="WP_008173331.1">
    <property type="nucleotide sequence ID" value="NC_010382.1"/>
</dbReference>
<dbReference type="SMR" id="B1HVK6"/>
<dbReference type="EnsemblBacteria" id="ACA38025">
    <property type="protein sequence ID" value="ACA38025"/>
    <property type="gene ID" value="Bsph_0398"/>
</dbReference>
<dbReference type="KEGG" id="lsp:Bsph_0398"/>
<dbReference type="HOGENOM" id="CLU_115790_0_0_9"/>
<dbReference type="Proteomes" id="UP000002164">
    <property type="component" value="Chromosome"/>
</dbReference>
<dbReference type="GO" id="GO:0003677">
    <property type="term" value="F:DNA binding"/>
    <property type="evidence" value="ECO:0007669"/>
    <property type="project" value="UniProtKB-UniRule"/>
</dbReference>
<dbReference type="GO" id="GO:0003700">
    <property type="term" value="F:DNA-binding transcription factor activity"/>
    <property type="evidence" value="ECO:0007669"/>
    <property type="project" value="UniProtKB-UniRule"/>
</dbReference>
<dbReference type="GO" id="GO:0045892">
    <property type="term" value="P:negative regulation of DNA-templated transcription"/>
    <property type="evidence" value="ECO:0007669"/>
    <property type="project" value="UniProtKB-UniRule"/>
</dbReference>
<dbReference type="GO" id="GO:0006950">
    <property type="term" value="P:response to stress"/>
    <property type="evidence" value="ECO:0007669"/>
    <property type="project" value="TreeGrafter"/>
</dbReference>
<dbReference type="GO" id="GO:0030435">
    <property type="term" value="P:sporulation resulting in formation of a cellular spore"/>
    <property type="evidence" value="ECO:0007669"/>
    <property type="project" value="UniProtKB-UniRule"/>
</dbReference>
<dbReference type="Gene3D" id="1.10.10.10">
    <property type="entry name" value="Winged helix-like DNA-binding domain superfamily/Winged helix DNA-binding domain"/>
    <property type="match status" value="1"/>
</dbReference>
<dbReference type="HAMAP" id="MF_01911">
    <property type="entry name" value="HTH_type_Hpr"/>
    <property type="match status" value="1"/>
</dbReference>
<dbReference type="InterPro" id="IPR000835">
    <property type="entry name" value="HTH_MarR-typ"/>
</dbReference>
<dbReference type="InterPro" id="IPR023488">
    <property type="entry name" value="HTH_tscrpt_reg_Hpr"/>
</dbReference>
<dbReference type="InterPro" id="IPR039422">
    <property type="entry name" value="MarR/SlyA-like"/>
</dbReference>
<dbReference type="InterPro" id="IPR023187">
    <property type="entry name" value="Tscrpt_reg_MarR-type_CS"/>
</dbReference>
<dbReference type="InterPro" id="IPR036388">
    <property type="entry name" value="WH-like_DNA-bd_sf"/>
</dbReference>
<dbReference type="InterPro" id="IPR036390">
    <property type="entry name" value="WH_DNA-bd_sf"/>
</dbReference>
<dbReference type="NCBIfam" id="NF010349">
    <property type="entry name" value="PRK13777.1"/>
    <property type="match status" value="1"/>
</dbReference>
<dbReference type="PANTHER" id="PTHR33164:SF58">
    <property type="entry name" value="DNA-BINDING TRANSCRIPTIONAL REPRESSOR SCOC"/>
    <property type="match status" value="1"/>
</dbReference>
<dbReference type="PANTHER" id="PTHR33164">
    <property type="entry name" value="TRANSCRIPTIONAL REGULATOR, MARR FAMILY"/>
    <property type="match status" value="1"/>
</dbReference>
<dbReference type="Pfam" id="PF01047">
    <property type="entry name" value="MarR"/>
    <property type="match status" value="1"/>
</dbReference>
<dbReference type="SMART" id="SM00347">
    <property type="entry name" value="HTH_MARR"/>
    <property type="match status" value="1"/>
</dbReference>
<dbReference type="SUPFAM" id="SSF46785">
    <property type="entry name" value="Winged helix' DNA-binding domain"/>
    <property type="match status" value="1"/>
</dbReference>
<dbReference type="PROSITE" id="PS01117">
    <property type="entry name" value="HTH_MARR_1"/>
    <property type="match status" value="1"/>
</dbReference>
<dbReference type="PROSITE" id="PS50995">
    <property type="entry name" value="HTH_MARR_2"/>
    <property type="match status" value="1"/>
</dbReference>
<protein>
    <recommendedName>
        <fullName evidence="1">HTH-type transcriptional regulator Hpr</fullName>
    </recommendedName>
    <alternativeName>
        <fullName evidence="1">Protease production regulatory protein Hpr</fullName>
    </alternativeName>
</protein>
<feature type="chain" id="PRO_0000343632" description="HTH-type transcriptional regulator Hpr">
    <location>
        <begin position="1"/>
        <end position="186"/>
    </location>
</feature>
<feature type="domain" description="HTH marR-type" evidence="1">
    <location>
        <begin position="13"/>
        <end position="157"/>
    </location>
</feature>
<feature type="DNA-binding region" description="H-T-H motif" evidence="1">
    <location>
        <begin position="63"/>
        <end position="86"/>
    </location>
</feature>
<comment type="function">
    <text evidence="1">Negative regulator of protease production and sporulation.</text>
</comment>
<comment type="subunit">
    <text evidence="1">Homodimer.</text>
</comment>
<organism>
    <name type="scientific">Lysinibacillus sphaericus (strain C3-41)</name>
    <dbReference type="NCBI Taxonomy" id="444177"/>
    <lineage>
        <taxon>Bacteria</taxon>
        <taxon>Bacillati</taxon>
        <taxon>Bacillota</taxon>
        <taxon>Bacilli</taxon>
        <taxon>Bacillales</taxon>
        <taxon>Bacillaceae</taxon>
        <taxon>Lysinibacillus</taxon>
    </lineage>
</organism>
<keyword id="KW-0238">DNA-binding</keyword>
<keyword id="KW-0678">Repressor</keyword>
<keyword id="KW-0749">Sporulation</keyword>
<keyword id="KW-0804">Transcription</keyword>
<keyword id="KW-0805">Transcription regulation</keyword>
<sequence length="186" mass="21957">MVLSEELYTQKEAMLYSQRIAQLSKALWKAVEKDWQQWIKPYDLNINEHHILWISYHLKGASISDVAKFGVMHVSTAFNFSKKLEERGFLKFSKRDDDKRNTYVELTEAGTELIVEMNKNYHNTYHSVLEGSLALKDLYGRFPDFLDVMAVIRNIYGEDFIDIFERSFQHFRDSFDTLEERPTVKG</sequence>